<sequence length="344" mass="39032">MKEELHAIRDEAIASVEEAKDMKSLQDLKVKYLGKKGSLTSVLRGMGKLSKEERPVIGEIANQVREQITAALDQKTEKMEEEALNEKLEKETIDVTLPGNPVHIGGKHLLTRVVEEIEDLFIGMGYEVKEGPEVETDYFNFEALNLPKNHPARDMQDTFFITNELLLRTQTSPVQARTMQAYNGEKPIKMICPGKVYRRDTDDATHSHQFRQIEGLVIDKDITLSDLKGTLDIFAKKMFGEDREIRLRPSFFPFTEPSVEMDVSCKVCSGQGCSVCKQTGWIEILGGGMVHPRVLEMSGYDPKVYSGFAFGMGQERIAMLKYGVNDIRHFYTNDIRFLTQFHQA</sequence>
<organism>
    <name type="scientific">Oceanobacillus iheyensis (strain DSM 14371 / CIP 107618 / JCM 11309 / KCTC 3954 / HTE831)</name>
    <dbReference type="NCBI Taxonomy" id="221109"/>
    <lineage>
        <taxon>Bacteria</taxon>
        <taxon>Bacillati</taxon>
        <taxon>Bacillota</taxon>
        <taxon>Bacilli</taxon>
        <taxon>Bacillales</taxon>
        <taxon>Bacillaceae</taxon>
        <taxon>Oceanobacillus</taxon>
    </lineage>
</organism>
<keyword id="KW-0030">Aminoacyl-tRNA synthetase</keyword>
<keyword id="KW-0067">ATP-binding</keyword>
<keyword id="KW-0963">Cytoplasm</keyword>
<keyword id="KW-0436">Ligase</keyword>
<keyword id="KW-0460">Magnesium</keyword>
<keyword id="KW-0479">Metal-binding</keyword>
<keyword id="KW-0547">Nucleotide-binding</keyword>
<keyword id="KW-0648">Protein biosynthesis</keyword>
<keyword id="KW-1185">Reference proteome</keyword>
<feature type="chain" id="PRO_0000126737" description="Phenylalanine--tRNA ligase alpha subunit">
    <location>
        <begin position="1"/>
        <end position="344"/>
    </location>
</feature>
<feature type="binding site" evidence="1">
    <location>
        <position position="256"/>
    </location>
    <ligand>
        <name>Mg(2+)</name>
        <dbReference type="ChEBI" id="CHEBI:18420"/>
        <note>shared with beta subunit</note>
    </ligand>
</feature>
<reference key="1">
    <citation type="journal article" date="2002" name="Nucleic Acids Res.">
        <title>Genome sequence of Oceanobacillus iheyensis isolated from the Iheya Ridge and its unexpected adaptive capabilities to extreme environments.</title>
        <authorList>
            <person name="Takami H."/>
            <person name="Takaki Y."/>
            <person name="Uchiyama I."/>
        </authorList>
    </citation>
    <scope>NUCLEOTIDE SEQUENCE [LARGE SCALE GENOMIC DNA]</scope>
    <source>
        <strain>DSM 14371 / CIP 107618 / JCM 11309 / KCTC 3954 / HTE831</strain>
    </source>
</reference>
<accession>Q8EPH4</accession>
<gene>
    <name evidence="1" type="primary">pheS</name>
    <name type="ordered locus">OB2131</name>
</gene>
<evidence type="ECO:0000255" key="1">
    <source>
        <dbReference type="HAMAP-Rule" id="MF_00281"/>
    </source>
</evidence>
<comment type="catalytic activity">
    <reaction evidence="1">
        <text>tRNA(Phe) + L-phenylalanine + ATP = L-phenylalanyl-tRNA(Phe) + AMP + diphosphate + H(+)</text>
        <dbReference type="Rhea" id="RHEA:19413"/>
        <dbReference type="Rhea" id="RHEA-COMP:9668"/>
        <dbReference type="Rhea" id="RHEA-COMP:9699"/>
        <dbReference type="ChEBI" id="CHEBI:15378"/>
        <dbReference type="ChEBI" id="CHEBI:30616"/>
        <dbReference type="ChEBI" id="CHEBI:33019"/>
        <dbReference type="ChEBI" id="CHEBI:58095"/>
        <dbReference type="ChEBI" id="CHEBI:78442"/>
        <dbReference type="ChEBI" id="CHEBI:78531"/>
        <dbReference type="ChEBI" id="CHEBI:456215"/>
        <dbReference type="EC" id="6.1.1.20"/>
    </reaction>
</comment>
<comment type="cofactor">
    <cofactor evidence="1">
        <name>Mg(2+)</name>
        <dbReference type="ChEBI" id="CHEBI:18420"/>
    </cofactor>
    <text evidence="1">Binds 2 magnesium ions per tetramer.</text>
</comment>
<comment type="subunit">
    <text evidence="1">Tetramer of two alpha and two beta subunits.</text>
</comment>
<comment type="subcellular location">
    <subcellularLocation>
        <location evidence="1">Cytoplasm</location>
    </subcellularLocation>
</comment>
<comment type="similarity">
    <text evidence="1">Belongs to the class-II aminoacyl-tRNA synthetase family. Phe-tRNA synthetase alpha subunit type 1 subfamily.</text>
</comment>
<name>SYFA_OCEIH</name>
<protein>
    <recommendedName>
        <fullName evidence="1">Phenylalanine--tRNA ligase alpha subunit</fullName>
        <ecNumber evidence="1">6.1.1.20</ecNumber>
    </recommendedName>
    <alternativeName>
        <fullName evidence="1">Phenylalanyl-tRNA synthetase alpha subunit</fullName>
        <shortName evidence="1">PheRS</shortName>
    </alternativeName>
</protein>
<dbReference type="EC" id="6.1.1.20" evidence="1"/>
<dbReference type="EMBL" id="BA000028">
    <property type="protein sequence ID" value="BAC14087.1"/>
    <property type="molecule type" value="Genomic_DNA"/>
</dbReference>
<dbReference type="RefSeq" id="WP_011066525.1">
    <property type="nucleotide sequence ID" value="NC_004193.1"/>
</dbReference>
<dbReference type="SMR" id="Q8EPH4"/>
<dbReference type="STRING" id="221109.gene:10734379"/>
<dbReference type="KEGG" id="oih:OB2131"/>
<dbReference type="eggNOG" id="COG0016">
    <property type="taxonomic scope" value="Bacteria"/>
</dbReference>
<dbReference type="HOGENOM" id="CLU_025086_0_1_9"/>
<dbReference type="OrthoDB" id="9800719at2"/>
<dbReference type="PhylomeDB" id="Q8EPH4"/>
<dbReference type="Proteomes" id="UP000000822">
    <property type="component" value="Chromosome"/>
</dbReference>
<dbReference type="GO" id="GO:0005737">
    <property type="term" value="C:cytoplasm"/>
    <property type="evidence" value="ECO:0007669"/>
    <property type="project" value="UniProtKB-SubCell"/>
</dbReference>
<dbReference type="GO" id="GO:0005524">
    <property type="term" value="F:ATP binding"/>
    <property type="evidence" value="ECO:0007669"/>
    <property type="project" value="UniProtKB-UniRule"/>
</dbReference>
<dbReference type="GO" id="GO:0140096">
    <property type="term" value="F:catalytic activity, acting on a protein"/>
    <property type="evidence" value="ECO:0007669"/>
    <property type="project" value="UniProtKB-ARBA"/>
</dbReference>
<dbReference type="GO" id="GO:0000287">
    <property type="term" value="F:magnesium ion binding"/>
    <property type="evidence" value="ECO:0007669"/>
    <property type="project" value="UniProtKB-UniRule"/>
</dbReference>
<dbReference type="GO" id="GO:0004826">
    <property type="term" value="F:phenylalanine-tRNA ligase activity"/>
    <property type="evidence" value="ECO:0007669"/>
    <property type="project" value="UniProtKB-UniRule"/>
</dbReference>
<dbReference type="GO" id="GO:0016740">
    <property type="term" value="F:transferase activity"/>
    <property type="evidence" value="ECO:0007669"/>
    <property type="project" value="UniProtKB-ARBA"/>
</dbReference>
<dbReference type="GO" id="GO:0000049">
    <property type="term" value="F:tRNA binding"/>
    <property type="evidence" value="ECO:0007669"/>
    <property type="project" value="InterPro"/>
</dbReference>
<dbReference type="GO" id="GO:0006432">
    <property type="term" value="P:phenylalanyl-tRNA aminoacylation"/>
    <property type="evidence" value="ECO:0007669"/>
    <property type="project" value="UniProtKB-UniRule"/>
</dbReference>
<dbReference type="CDD" id="cd00496">
    <property type="entry name" value="PheRS_alpha_core"/>
    <property type="match status" value="1"/>
</dbReference>
<dbReference type="FunFam" id="3.30.930.10:FF:000003">
    <property type="entry name" value="Phenylalanine--tRNA ligase alpha subunit"/>
    <property type="match status" value="1"/>
</dbReference>
<dbReference type="Gene3D" id="3.30.930.10">
    <property type="entry name" value="Bira Bifunctional Protein, Domain 2"/>
    <property type="match status" value="1"/>
</dbReference>
<dbReference type="HAMAP" id="MF_00281">
    <property type="entry name" value="Phe_tRNA_synth_alpha1"/>
    <property type="match status" value="1"/>
</dbReference>
<dbReference type="InterPro" id="IPR006195">
    <property type="entry name" value="aa-tRNA-synth_II"/>
</dbReference>
<dbReference type="InterPro" id="IPR045864">
    <property type="entry name" value="aa-tRNA-synth_II/BPL/LPL"/>
</dbReference>
<dbReference type="InterPro" id="IPR004529">
    <property type="entry name" value="Phe-tRNA-synth_IIc_asu"/>
</dbReference>
<dbReference type="InterPro" id="IPR004188">
    <property type="entry name" value="Phe-tRNA_ligase_II_N"/>
</dbReference>
<dbReference type="InterPro" id="IPR022911">
    <property type="entry name" value="Phe_tRNA_ligase_alpha1_bac"/>
</dbReference>
<dbReference type="InterPro" id="IPR002319">
    <property type="entry name" value="Phenylalanyl-tRNA_Synthase"/>
</dbReference>
<dbReference type="InterPro" id="IPR010978">
    <property type="entry name" value="tRNA-bd_arm"/>
</dbReference>
<dbReference type="NCBIfam" id="TIGR00468">
    <property type="entry name" value="pheS"/>
    <property type="match status" value="1"/>
</dbReference>
<dbReference type="PANTHER" id="PTHR11538:SF41">
    <property type="entry name" value="PHENYLALANINE--TRNA LIGASE, MITOCHONDRIAL"/>
    <property type="match status" value="1"/>
</dbReference>
<dbReference type="PANTHER" id="PTHR11538">
    <property type="entry name" value="PHENYLALANYL-TRNA SYNTHETASE"/>
    <property type="match status" value="1"/>
</dbReference>
<dbReference type="Pfam" id="PF02912">
    <property type="entry name" value="Phe_tRNA-synt_N"/>
    <property type="match status" value="1"/>
</dbReference>
<dbReference type="Pfam" id="PF01409">
    <property type="entry name" value="tRNA-synt_2d"/>
    <property type="match status" value="1"/>
</dbReference>
<dbReference type="SUPFAM" id="SSF55681">
    <property type="entry name" value="Class II aaRS and biotin synthetases"/>
    <property type="match status" value="1"/>
</dbReference>
<dbReference type="SUPFAM" id="SSF46589">
    <property type="entry name" value="tRNA-binding arm"/>
    <property type="match status" value="1"/>
</dbReference>
<dbReference type="PROSITE" id="PS50862">
    <property type="entry name" value="AA_TRNA_LIGASE_II"/>
    <property type="match status" value="1"/>
</dbReference>
<proteinExistence type="inferred from homology"/>